<evidence type="ECO:0000255" key="1">
    <source>
        <dbReference type="PROSITE-ProRule" id="PRU00108"/>
    </source>
</evidence>
<evidence type="ECO:0000255" key="2">
    <source>
        <dbReference type="PROSITE-ProRule" id="PRU00559"/>
    </source>
</evidence>
<evidence type="ECO:0000256" key="3">
    <source>
        <dbReference type="SAM" id="MobiDB-lite"/>
    </source>
</evidence>
<evidence type="ECO:0000305" key="4"/>
<protein>
    <recommendedName>
        <fullName>Homeotic protein knotted-1</fullName>
        <shortName>TKN1</shortName>
    </recommendedName>
</protein>
<gene>
    <name type="primary">KN1</name>
</gene>
<proteinExistence type="evidence at transcript level"/>
<keyword id="KW-0238">DNA-binding</keyword>
<keyword id="KW-0371">Homeobox</keyword>
<keyword id="KW-0539">Nucleus</keyword>
<keyword id="KW-1185">Reference proteome</keyword>
<comment type="function">
    <text>Appears to be involved in meristem formation and in the regulation of leaf morphology. Misexpression makes the leaf more compound which is always associated with growth retardation and loss of apical dominance, resulting in dwarfed, bushy plants. Probably binds to the DNA sequence 5'-TGAC-3'.</text>
</comment>
<comment type="subcellular location">
    <subcellularLocation>
        <location evidence="4">Nucleus</location>
    </subcellularLocation>
</comment>
<comment type="tissue specificity">
    <text>Expressed in the apical meristems, in the newly emerged lateral primordia in the floral bud, in their vascular bundles and in the cortex parenchyma of the floral pedicle. Also present in the lateral tips of leaf primordia.</text>
</comment>
<comment type="similarity">
    <text evidence="2">Belongs to the TALE/KNOX homeobox family.</text>
</comment>
<dbReference type="EMBL" id="U32247">
    <property type="protein sequence ID" value="AAC49251.1"/>
    <property type="molecule type" value="mRNA"/>
</dbReference>
<dbReference type="PIR" id="T07776">
    <property type="entry name" value="T07776"/>
</dbReference>
<dbReference type="RefSeq" id="NP_001233807.2">
    <property type="nucleotide sequence ID" value="NM_001246878.2"/>
</dbReference>
<dbReference type="SMR" id="Q41330"/>
<dbReference type="FunCoup" id="Q41330">
    <property type="interactions" value="203"/>
</dbReference>
<dbReference type="STRING" id="4081.Q41330"/>
<dbReference type="PaxDb" id="4081-Solyc04g077210.2.1"/>
<dbReference type="GeneID" id="544007"/>
<dbReference type="KEGG" id="sly:544007"/>
<dbReference type="eggNOG" id="KOG0773">
    <property type="taxonomic scope" value="Eukaryota"/>
</dbReference>
<dbReference type="InParanoid" id="Q41330"/>
<dbReference type="OrthoDB" id="10056939at2759"/>
<dbReference type="Proteomes" id="UP000004994">
    <property type="component" value="Unplaced"/>
</dbReference>
<dbReference type="ExpressionAtlas" id="Q41330">
    <property type="expression patterns" value="baseline"/>
</dbReference>
<dbReference type="GO" id="GO:0005634">
    <property type="term" value="C:nucleus"/>
    <property type="evidence" value="ECO:0000318"/>
    <property type="project" value="GO_Central"/>
</dbReference>
<dbReference type="GO" id="GO:0003677">
    <property type="term" value="F:DNA binding"/>
    <property type="evidence" value="ECO:0007669"/>
    <property type="project" value="UniProtKB-KW"/>
</dbReference>
<dbReference type="GO" id="GO:0000981">
    <property type="term" value="F:DNA-binding transcription factor activity, RNA polymerase II-specific"/>
    <property type="evidence" value="ECO:0007669"/>
    <property type="project" value="InterPro"/>
</dbReference>
<dbReference type="CDD" id="cd00086">
    <property type="entry name" value="homeodomain"/>
    <property type="match status" value="1"/>
</dbReference>
<dbReference type="FunFam" id="1.10.10.60:FF:000076">
    <property type="entry name" value="Homeobox protein knotted-1-like 2"/>
    <property type="match status" value="1"/>
</dbReference>
<dbReference type="Gene3D" id="1.10.10.60">
    <property type="entry name" value="Homeodomain-like"/>
    <property type="match status" value="1"/>
</dbReference>
<dbReference type="InterPro" id="IPR005539">
    <property type="entry name" value="ELK_dom"/>
</dbReference>
<dbReference type="InterPro" id="IPR001356">
    <property type="entry name" value="HD"/>
</dbReference>
<dbReference type="InterPro" id="IPR017970">
    <property type="entry name" value="Homeobox_CS"/>
</dbReference>
<dbReference type="InterPro" id="IPR009057">
    <property type="entry name" value="Homeodomain-like_sf"/>
</dbReference>
<dbReference type="InterPro" id="IPR008422">
    <property type="entry name" value="KN_HD"/>
</dbReference>
<dbReference type="InterPro" id="IPR005540">
    <property type="entry name" value="KNOX1"/>
</dbReference>
<dbReference type="InterPro" id="IPR005541">
    <property type="entry name" value="KNOX2"/>
</dbReference>
<dbReference type="InterPro" id="IPR050224">
    <property type="entry name" value="TALE_homeobox"/>
</dbReference>
<dbReference type="PANTHER" id="PTHR11850">
    <property type="entry name" value="HOMEOBOX PROTEIN TRANSCRIPTION FACTORS"/>
    <property type="match status" value="1"/>
</dbReference>
<dbReference type="Pfam" id="PF03789">
    <property type="entry name" value="ELK"/>
    <property type="match status" value="1"/>
</dbReference>
<dbReference type="Pfam" id="PF05920">
    <property type="entry name" value="Homeobox_KN"/>
    <property type="match status" value="1"/>
</dbReference>
<dbReference type="Pfam" id="PF03790">
    <property type="entry name" value="KNOX1"/>
    <property type="match status" value="1"/>
</dbReference>
<dbReference type="Pfam" id="PF03791">
    <property type="entry name" value="KNOX2"/>
    <property type="match status" value="1"/>
</dbReference>
<dbReference type="SMART" id="SM01188">
    <property type="entry name" value="ELK"/>
    <property type="match status" value="1"/>
</dbReference>
<dbReference type="SMART" id="SM00389">
    <property type="entry name" value="HOX"/>
    <property type="match status" value="1"/>
</dbReference>
<dbReference type="SMART" id="SM01255">
    <property type="entry name" value="KNOX1"/>
    <property type="match status" value="1"/>
</dbReference>
<dbReference type="SMART" id="SM01256">
    <property type="entry name" value="KNOX2"/>
    <property type="match status" value="1"/>
</dbReference>
<dbReference type="SUPFAM" id="SSF46689">
    <property type="entry name" value="Homeodomain-like"/>
    <property type="match status" value="1"/>
</dbReference>
<dbReference type="PROSITE" id="PS51213">
    <property type="entry name" value="ELK"/>
    <property type="match status" value="1"/>
</dbReference>
<dbReference type="PROSITE" id="PS00027">
    <property type="entry name" value="HOMEOBOX_1"/>
    <property type="match status" value="1"/>
</dbReference>
<dbReference type="PROSITE" id="PS50071">
    <property type="entry name" value="HOMEOBOX_2"/>
    <property type="match status" value="1"/>
</dbReference>
<reference key="1">
    <citation type="journal article" date="1996" name="Cell">
        <title>The making of a compound leaf: genetic manipulation of leaf architecture in tomato.</title>
        <authorList>
            <person name="Hareven D."/>
            <person name="Gutfinger T."/>
            <person name="Parnis A."/>
            <person name="Eshed Y."/>
            <person name="Lifschitz E."/>
        </authorList>
    </citation>
    <scope>NUCLEOTIDE SEQUENCE [MRNA]</scope>
    <source>
        <strain>cv. SP+,93-137</strain>
        <tissue>Shoot</tissue>
    </source>
</reference>
<organism>
    <name type="scientific">Solanum lycopersicum</name>
    <name type="common">Tomato</name>
    <name type="synonym">Lycopersicon esculentum</name>
    <dbReference type="NCBI Taxonomy" id="4081"/>
    <lineage>
        <taxon>Eukaryota</taxon>
        <taxon>Viridiplantae</taxon>
        <taxon>Streptophyta</taxon>
        <taxon>Embryophyta</taxon>
        <taxon>Tracheophyta</taxon>
        <taxon>Spermatophyta</taxon>
        <taxon>Magnoliopsida</taxon>
        <taxon>eudicotyledons</taxon>
        <taxon>Gunneridae</taxon>
        <taxon>Pentapetalae</taxon>
        <taxon>asterids</taxon>
        <taxon>lamiids</taxon>
        <taxon>Solanales</taxon>
        <taxon>Solanaceae</taxon>
        <taxon>Solanoideae</taxon>
        <taxon>Solaneae</taxon>
        <taxon>Solanum</taxon>
        <taxon>Solanum subgen. Lycopersicon</taxon>
    </lineage>
</organism>
<accession>Q41330</accession>
<feature type="chain" id="PRO_0000048955" description="Homeotic protein knotted-1">
    <location>
        <begin position="1"/>
        <end position="355"/>
    </location>
</feature>
<feature type="domain" description="ELK" evidence="2">
    <location>
        <begin position="236"/>
        <end position="256"/>
    </location>
</feature>
<feature type="DNA-binding region" description="Homeobox; TALE-type" evidence="1">
    <location>
        <begin position="257"/>
        <end position="320"/>
    </location>
</feature>
<feature type="region of interest" description="Disordered" evidence="3">
    <location>
        <begin position="205"/>
        <end position="233"/>
    </location>
</feature>
<sequence length="355" mass="40179">MENNNYNNHVSGENSGGQRGHFFYGGNQVLGGAAPIYGRGGDCYDPMIVKTEGGGSTSHHNHTFHYPSIIRNHHHDSTETSGGGAGAGEVIEALKAKIIAHPQCSNLLDAYMDCQKVGAPPEVAARLSAVRQEFEARQRRSLTDRDVSKDPELDQFMEAYYDMLVKYREELTRPLQEAMEFMQKIEAQLNMLGNAPVRIFNSEDKCEGVGSSEEDQDNSGGETELPEIDPRAEDRELKNHLLRKYSGYLSSLKQELSKKKKKGKLPKDARQKLITWWELHYKWPYPSESEKVALAESTGLDQKQINNWFINQRKRHWKPSEDMQFMVMDGLHPQSAAALYMEGHYMGEGPFRLGQ</sequence>
<name>KN1_SOLLC</name>